<reference key="1">
    <citation type="journal article" date="2005" name="Science">
        <title>The transcriptional landscape of the mammalian genome.</title>
        <authorList>
            <person name="Carninci P."/>
            <person name="Kasukawa T."/>
            <person name="Katayama S."/>
            <person name="Gough J."/>
            <person name="Frith M.C."/>
            <person name="Maeda N."/>
            <person name="Oyama R."/>
            <person name="Ravasi T."/>
            <person name="Lenhard B."/>
            <person name="Wells C."/>
            <person name="Kodzius R."/>
            <person name="Shimokawa K."/>
            <person name="Bajic V.B."/>
            <person name="Brenner S.E."/>
            <person name="Batalov S."/>
            <person name="Forrest A.R."/>
            <person name="Zavolan M."/>
            <person name="Davis M.J."/>
            <person name="Wilming L.G."/>
            <person name="Aidinis V."/>
            <person name="Allen J.E."/>
            <person name="Ambesi-Impiombato A."/>
            <person name="Apweiler R."/>
            <person name="Aturaliya R.N."/>
            <person name="Bailey T.L."/>
            <person name="Bansal M."/>
            <person name="Baxter L."/>
            <person name="Beisel K.W."/>
            <person name="Bersano T."/>
            <person name="Bono H."/>
            <person name="Chalk A.M."/>
            <person name="Chiu K.P."/>
            <person name="Choudhary V."/>
            <person name="Christoffels A."/>
            <person name="Clutterbuck D.R."/>
            <person name="Crowe M.L."/>
            <person name="Dalla E."/>
            <person name="Dalrymple B.P."/>
            <person name="de Bono B."/>
            <person name="Della Gatta G."/>
            <person name="di Bernardo D."/>
            <person name="Down T."/>
            <person name="Engstrom P."/>
            <person name="Fagiolini M."/>
            <person name="Faulkner G."/>
            <person name="Fletcher C.F."/>
            <person name="Fukushima T."/>
            <person name="Furuno M."/>
            <person name="Futaki S."/>
            <person name="Gariboldi M."/>
            <person name="Georgii-Hemming P."/>
            <person name="Gingeras T.R."/>
            <person name="Gojobori T."/>
            <person name="Green R.E."/>
            <person name="Gustincich S."/>
            <person name="Harbers M."/>
            <person name="Hayashi Y."/>
            <person name="Hensch T.K."/>
            <person name="Hirokawa N."/>
            <person name="Hill D."/>
            <person name="Huminiecki L."/>
            <person name="Iacono M."/>
            <person name="Ikeo K."/>
            <person name="Iwama A."/>
            <person name="Ishikawa T."/>
            <person name="Jakt M."/>
            <person name="Kanapin A."/>
            <person name="Katoh M."/>
            <person name="Kawasawa Y."/>
            <person name="Kelso J."/>
            <person name="Kitamura H."/>
            <person name="Kitano H."/>
            <person name="Kollias G."/>
            <person name="Krishnan S.P."/>
            <person name="Kruger A."/>
            <person name="Kummerfeld S.K."/>
            <person name="Kurochkin I.V."/>
            <person name="Lareau L.F."/>
            <person name="Lazarevic D."/>
            <person name="Lipovich L."/>
            <person name="Liu J."/>
            <person name="Liuni S."/>
            <person name="McWilliam S."/>
            <person name="Madan Babu M."/>
            <person name="Madera M."/>
            <person name="Marchionni L."/>
            <person name="Matsuda H."/>
            <person name="Matsuzawa S."/>
            <person name="Miki H."/>
            <person name="Mignone F."/>
            <person name="Miyake S."/>
            <person name="Morris K."/>
            <person name="Mottagui-Tabar S."/>
            <person name="Mulder N."/>
            <person name="Nakano N."/>
            <person name="Nakauchi H."/>
            <person name="Ng P."/>
            <person name="Nilsson R."/>
            <person name="Nishiguchi S."/>
            <person name="Nishikawa S."/>
            <person name="Nori F."/>
            <person name="Ohara O."/>
            <person name="Okazaki Y."/>
            <person name="Orlando V."/>
            <person name="Pang K.C."/>
            <person name="Pavan W.J."/>
            <person name="Pavesi G."/>
            <person name="Pesole G."/>
            <person name="Petrovsky N."/>
            <person name="Piazza S."/>
            <person name="Reed J."/>
            <person name="Reid J.F."/>
            <person name="Ring B.Z."/>
            <person name="Ringwald M."/>
            <person name="Rost B."/>
            <person name="Ruan Y."/>
            <person name="Salzberg S.L."/>
            <person name="Sandelin A."/>
            <person name="Schneider C."/>
            <person name="Schoenbach C."/>
            <person name="Sekiguchi K."/>
            <person name="Semple C.A."/>
            <person name="Seno S."/>
            <person name="Sessa L."/>
            <person name="Sheng Y."/>
            <person name="Shibata Y."/>
            <person name="Shimada H."/>
            <person name="Shimada K."/>
            <person name="Silva D."/>
            <person name="Sinclair B."/>
            <person name="Sperling S."/>
            <person name="Stupka E."/>
            <person name="Sugiura K."/>
            <person name="Sultana R."/>
            <person name="Takenaka Y."/>
            <person name="Taki K."/>
            <person name="Tammoja K."/>
            <person name="Tan S.L."/>
            <person name="Tang S."/>
            <person name="Taylor M.S."/>
            <person name="Tegner J."/>
            <person name="Teichmann S.A."/>
            <person name="Ueda H.R."/>
            <person name="van Nimwegen E."/>
            <person name="Verardo R."/>
            <person name="Wei C.L."/>
            <person name="Yagi K."/>
            <person name="Yamanishi H."/>
            <person name="Zabarovsky E."/>
            <person name="Zhu S."/>
            <person name="Zimmer A."/>
            <person name="Hide W."/>
            <person name="Bult C."/>
            <person name="Grimmond S.M."/>
            <person name="Teasdale R.D."/>
            <person name="Liu E.T."/>
            <person name="Brusic V."/>
            <person name="Quackenbush J."/>
            <person name="Wahlestedt C."/>
            <person name="Mattick J.S."/>
            <person name="Hume D.A."/>
            <person name="Kai C."/>
            <person name="Sasaki D."/>
            <person name="Tomaru Y."/>
            <person name="Fukuda S."/>
            <person name="Kanamori-Katayama M."/>
            <person name="Suzuki M."/>
            <person name="Aoki J."/>
            <person name="Arakawa T."/>
            <person name="Iida J."/>
            <person name="Imamura K."/>
            <person name="Itoh M."/>
            <person name="Kato T."/>
            <person name="Kawaji H."/>
            <person name="Kawagashira N."/>
            <person name="Kawashima T."/>
            <person name="Kojima M."/>
            <person name="Kondo S."/>
            <person name="Konno H."/>
            <person name="Nakano K."/>
            <person name="Ninomiya N."/>
            <person name="Nishio T."/>
            <person name="Okada M."/>
            <person name="Plessy C."/>
            <person name="Shibata K."/>
            <person name="Shiraki T."/>
            <person name="Suzuki S."/>
            <person name="Tagami M."/>
            <person name="Waki K."/>
            <person name="Watahiki A."/>
            <person name="Okamura-Oho Y."/>
            <person name="Suzuki H."/>
            <person name="Kawai J."/>
            <person name="Hayashizaki Y."/>
        </authorList>
    </citation>
    <scope>NUCLEOTIDE SEQUENCE [LARGE SCALE MRNA] (ISOFORMS 1; 2 AND 3)</scope>
    <source>
        <strain>C57BL/6J</strain>
        <tissue>Corpora quadrigemina</tissue>
        <tissue>Eye</tissue>
        <tissue>Pituitary</tissue>
        <tissue>Spleen</tissue>
        <tissue>Thymus</tissue>
    </source>
</reference>
<reference key="2">
    <citation type="journal article" date="2004" name="Genome Res.">
        <title>The status, quality, and expansion of the NIH full-length cDNA project: the Mammalian Gene Collection (MGC).</title>
        <authorList>
            <consortium name="The MGC Project Team"/>
        </authorList>
    </citation>
    <scope>NUCLEOTIDE SEQUENCE [LARGE SCALE MRNA] (ISOFORM 4)</scope>
    <source>
        <tissue>Eye</tissue>
        <tissue>Pituitary</tissue>
    </source>
</reference>
<accession>Q3T9Z9</accession>
<accession>Q5FWB1</accession>
<accession>Q6NXI1</accession>
<accession>Q8BJZ1</accession>
<accession>Q8BK40</accession>
<accession>Q8BKH3</accession>
<accession>Q8BL75</accession>
<accession>Q9CSP5</accession>
<dbReference type="EC" id="3.4.19.12" evidence="1"/>
<dbReference type="EMBL" id="AK012263">
    <property type="protein sequence ID" value="BAB28126.1"/>
    <property type="molecule type" value="mRNA"/>
</dbReference>
<dbReference type="EMBL" id="AK046191">
    <property type="protein sequence ID" value="BAC32628.1"/>
    <property type="molecule type" value="mRNA"/>
</dbReference>
<dbReference type="EMBL" id="AK052071">
    <property type="protein sequence ID" value="BAC34846.1"/>
    <property type="molecule type" value="mRNA"/>
</dbReference>
<dbReference type="EMBL" id="AK077304">
    <property type="protein sequence ID" value="BAC36739.1"/>
    <property type="molecule type" value="mRNA"/>
</dbReference>
<dbReference type="EMBL" id="AK077730">
    <property type="protein sequence ID" value="BAC36984.1"/>
    <property type="status" value="ALT_FRAME"/>
    <property type="molecule type" value="mRNA"/>
</dbReference>
<dbReference type="EMBL" id="AK172184">
    <property type="protein sequence ID" value="BAE42871.1"/>
    <property type="molecule type" value="mRNA"/>
</dbReference>
<dbReference type="EMBL" id="BC067065">
    <property type="protein sequence ID" value="AAH67065.1"/>
    <property type="molecule type" value="mRNA"/>
</dbReference>
<dbReference type="EMBL" id="BC089514">
    <property type="protein sequence ID" value="AAH89514.1"/>
    <property type="molecule type" value="mRNA"/>
</dbReference>
<dbReference type="CCDS" id="CCDS23772.1">
    <molecule id="Q3T9Z9-2"/>
</dbReference>
<dbReference type="CCDS" id="CCDS87987.1">
    <molecule id="Q3T9Z9-1"/>
</dbReference>
<dbReference type="RefSeq" id="NP_001346384.1">
    <molecule id="Q3T9Z9-1"/>
    <property type="nucleotide sequence ID" value="NM_001359455.1"/>
</dbReference>
<dbReference type="RefSeq" id="NP_001346385.1">
    <molecule id="Q3T9Z9-3"/>
    <property type="nucleotide sequence ID" value="NM_001359456.1"/>
</dbReference>
<dbReference type="RefSeq" id="NP_082563.1">
    <molecule id="Q3T9Z9-2"/>
    <property type="nucleotide sequence ID" value="NM_028287.3"/>
</dbReference>
<dbReference type="RefSeq" id="XP_006512930.1">
    <property type="nucleotide sequence ID" value="XM_006512867.3"/>
</dbReference>
<dbReference type="RefSeq" id="XP_006512931.1">
    <molecule id="Q3T9Z9-1"/>
    <property type="nucleotide sequence ID" value="XM_006512868.5"/>
</dbReference>
<dbReference type="RefSeq" id="XP_006512932.1">
    <molecule id="Q3T9Z9-1"/>
    <property type="nucleotide sequence ID" value="XM_006512869.5"/>
</dbReference>
<dbReference type="RefSeq" id="XP_006512933.1">
    <molecule id="Q3T9Z9-1"/>
    <property type="nucleotide sequence ID" value="XM_006512870.5"/>
</dbReference>
<dbReference type="RefSeq" id="XP_036011935.1">
    <molecule id="Q3T9Z9-1"/>
    <property type="nucleotide sequence ID" value="XM_036156042.1"/>
</dbReference>
<dbReference type="SMR" id="Q3T9Z9"/>
<dbReference type="BioGRID" id="215450">
    <property type="interactions" value="3"/>
</dbReference>
<dbReference type="FunCoup" id="Q3T9Z9">
    <property type="interactions" value="1948"/>
</dbReference>
<dbReference type="STRING" id="10090.ENSMUSP00000037121"/>
<dbReference type="iPTMnet" id="Q3T9Z9"/>
<dbReference type="PhosphoSitePlus" id="Q3T9Z9"/>
<dbReference type="PaxDb" id="10090-ENSMUSP00000037121"/>
<dbReference type="PeptideAtlas" id="Q3T9Z9"/>
<dbReference type="ProteomicsDB" id="275167">
    <molecule id="Q3T9Z9-1"/>
</dbReference>
<dbReference type="ProteomicsDB" id="275168">
    <molecule id="Q3T9Z9-2"/>
</dbReference>
<dbReference type="ProteomicsDB" id="275169">
    <molecule id="Q3T9Z9-3"/>
</dbReference>
<dbReference type="ProteomicsDB" id="275170">
    <molecule id="Q3T9Z9-4"/>
</dbReference>
<dbReference type="Antibodypedia" id="32518">
    <property type="antibodies" value="108 antibodies from 18 providers"/>
</dbReference>
<dbReference type="Ensembl" id="ENSMUST00000048222.6">
    <molecule id="Q3T9Z9-2"/>
    <property type="protein sequence ID" value="ENSMUSP00000037121.5"/>
    <property type="gene ID" value="ENSMUSG00000039531.9"/>
</dbReference>
<dbReference type="Ensembl" id="ENSMUST00000218055.2">
    <molecule id="Q3T9Z9-1"/>
    <property type="protein sequence ID" value="ENSMUSP00000151811.2"/>
    <property type="gene ID" value="ENSMUSG00000039531.9"/>
</dbReference>
<dbReference type="Ensembl" id="ENSMUST00000218275.2">
    <molecule id="Q3T9Z9-4"/>
    <property type="protein sequence ID" value="ENSMUSP00000151484.2"/>
    <property type="gene ID" value="ENSMUSG00000039531.9"/>
</dbReference>
<dbReference type="Ensembl" id="ENSMUST00000219457.2">
    <molecule id="Q3T9Z9-4"/>
    <property type="protein sequence ID" value="ENSMUSP00000151455.2"/>
    <property type="gene ID" value="ENSMUSG00000039531.9"/>
</dbReference>
<dbReference type="GeneID" id="72580"/>
<dbReference type="KEGG" id="mmu:72580"/>
<dbReference type="UCSC" id="uc007euj.1">
    <molecule id="Q3T9Z9-3"/>
    <property type="organism name" value="mouse"/>
</dbReference>
<dbReference type="UCSC" id="uc007euk.1">
    <molecule id="Q3T9Z9-1"/>
    <property type="organism name" value="mouse"/>
</dbReference>
<dbReference type="UCSC" id="uc007eum.1">
    <molecule id="Q3T9Z9-2"/>
    <property type="organism name" value="mouse"/>
</dbReference>
<dbReference type="AGR" id="MGI:1919830"/>
<dbReference type="CTD" id="221302"/>
<dbReference type="MGI" id="MGI:1919830">
    <property type="gene designation" value="Zup1"/>
</dbReference>
<dbReference type="VEuPathDB" id="HostDB:ENSMUSG00000039531"/>
<dbReference type="eggNOG" id="KOG4696">
    <property type="taxonomic scope" value="Eukaryota"/>
</dbReference>
<dbReference type="GeneTree" id="ENSGT00390000008232"/>
<dbReference type="HOGENOM" id="CLU_017060_1_1_1"/>
<dbReference type="InParanoid" id="Q3T9Z9"/>
<dbReference type="OMA" id="CGSKAWI"/>
<dbReference type="OrthoDB" id="288987at2759"/>
<dbReference type="PhylomeDB" id="Q3T9Z9"/>
<dbReference type="TreeFam" id="TF323699"/>
<dbReference type="BioGRID-ORCS" id="72580">
    <property type="hits" value="2 hits in 75 CRISPR screens"/>
</dbReference>
<dbReference type="ChiTaRS" id="Zufsp">
    <property type="organism name" value="mouse"/>
</dbReference>
<dbReference type="PRO" id="PR:Q3T9Z9"/>
<dbReference type="Proteomes" id="UP000000589">
    <property type="component" value="Chromosome 10"/>
</dbReference>
<dbReference type="RNAct" id="Q3T9Z9">
    <property type="molecule type" value="protein"/>
</dbReference>
<dbReference type="Bgee" id="ENSMUSG00000039531">
    <property type="expression patterns" value="Expressed in spermatocyte and 257 other cell types or tissues"/>
</dbReference>
<dbReference type="ExpressionAtlas" id="Q3T9Z9">
    <property type="expression patterns" value="baseline and differential"/>
</dbReference>
<dbReference type="GO" id="GO:0005829">
    <property type="term" value="C:cytosol"/>
    <property type="evidence" value="ECO:0007669"/>
    <property type="project" value="Ensembl"/>
</dbReference>
<dbReference type="GO" id="GO:0005654">
    <property type="term" value="C:nucleoplasm"/>
    <property type="evidence" value="ECO:0007669"/>
    <property type="project" value="Ensembl"/>
</dbReference>
<dbReference type="GO" id="GO:0004843">
    <property type="term" value="F:cysteine-type deubiquitinase activity"/>
    <property type="evidence" value="ECO:0007669"/>
    <property type="project" value="UniProtKB-EC"/>
</dbReference>
<dbReference type="GO" id="GO:0008270">
    <property type="term" value="F:zinc ion binding"/>
    <property type="evidence" value="ECO:0007669"/>
    <property type="project" value="UniProtKB-KW"/>
</dbReference>
<dbReference type="FunFam" id="3.90.70.130:FF:000002">
    <property type="entry name" value="Zinc finger containing ubiquitin peptidase 1"/>
    <property type="match status" value="1"/>
</dbReference>
<dbReference type="Gene3D" id="3.90.70.130">
    <property type="match status" value="1"/>
</dbReference>
<dbReference type="Gene3D" id="3.30.160.60">
    <property type="entry name" value="Classic Zinc Finger"/>
    <property type="match status" value="1"/>
</dbReference>
<dbReference type="InterPro" id="IPR012462">
    <property type="entry name" value="UfSP1/2_DUB_cat"/>
</dbReference>
<dbReference type="InterPro" id="IPR050688">
    <property type="entry name" value="Zinc_finger/UBP_domain"/>
</dbReference>
<dbReference type="InterPro" id="IPR013087">
    <property type="entry name" value="Znf_C2H2_type"/>
</dbReference>
<dbReference type="PANTHER" id="PTHR24403">
    <property type="entry name" value="ZINC FINGER PROTEIN"/>
    <property type="match status" value="1"/>
</dbReference>
<dbReference type="PANTHER" id="PTHR24403:SF82">
    <property type="entry name" value="ZINC FINGER-CONTAINING UBIQUITIN PEPTIDASE 1"/>
    <property type="match status" value="1"/>
</dbReference>
<dbReference type="Pfam" id="PF07910">
    <property type="entry name" value="Peptidase_C78"/>
    <property type="match status" value="1"/>
</dbReference>
<dbReference type="SMART" id="SM00355">
    <property type="entry name" value="ZnF_C2H2"/>
    <property type="match status" value="4"/>
</dbReference>
<dbReference type="PROSITE" id="PS00028">
    <property type="entry name" value="ZINC_FINGER_C2H2_1"/>
    <property type="match status" value="2"/>
</dbReference>
<dbReference type="PROSITE" id="PS50157">
    <property type="entry name" value="ZINC_FINGER_C2H2_2"/>
    <property type="match status" value="1"/>
</dbReference>
<name>ZUP1_MOUSE</name>
<evidence type="ECO:0000250" key="1">
    <source>
        <dbReference type="UniProtKB" id="Q96AP4"/>
    </source>
</evidence>
<evidence type="ECO:0000250" key="2">
    <source>
        <dbReference type="UniProtKB" id="Q99K23"/>
    </source>
</evidence>
<evidence type="ECO:0000255" key="3">
    <source>
        <dbReference type="PROSITE-ProRule" id="PRU00042"/>
    </source>
</evidence>
<evidence type="ECO:0000256" key="4">
    <source>
        <dbReference type="SAM" id="MobiDB-lite"/>
    </source>
</evidence>
<evidence type="ECO:0000303" key="5">
    <source>
    </source>
</evidence>
<evidence type="ECO:0000303" key="6">
    <source>
    </source>
</evidence>
<evidence type="ECO:0000305" key="7"/>
<evidence type="ECO:0000312" key="8">
    <source>
        <dbReference type="MGI" id="MGI:1919830"/>
    </source>
</evidence>
<proteinExistence type="evidence at transcript level"/>
<organism>
    <name type="scientific">Mus musculus</name>
    <name type="common">Mouse</name>
    <dbReference type="NCBI Taxonomy" id="10090"/>
    <lineage>
        <taxon>Eukaryota</taxon>
        <taxon>Metazoa</taxon>
        <taxon>Chordata</taxon>
        <taxon>Craniata</taxon>
        <taxon>Vertebrata</taxon>
        <taxon>Euteleostomi</taxon>
        <taxon>Mammalia</taxon>
        <taxon>Eutheria</taxon>
        <taxon>Euarchontoglires</taxon>
        <taxon>Glires</taxon>
        <taxon>Rodentia</taxon>
        <taxon>Myomorpha</taxon>
        <taxon>Muroidea</taxon>
        <taxon>Muridae</taxon>
        <taxon>Murinae</taxon>
        <taxon>Mus</taxon>
        <taxon>Mus</taxon>
    </lineage>
</organism>
<comment type="function">
    <text evidence="1">Deubiquitinase with endodeubiquitinase activity that specifically interacts with and cleaves 'Lys-63'-linked long polyubiquitin chains. Shows only weak activity against 'Lys-11' and 'Lys-48'-linked chains. Plays an important role in genome stability pathways, functioning to prevent spontaneous DNA damage and also promote cellular survival in response to exogenous DNA damage. Modulates the ubiquitination status of replication protein A (RPA) complex proteins in response to replication stress.</text>
</comment>
<comment type="catalytic activity">
    <reaction evidence="1">
        <text>Thiol-dependent hydrolysis of ester, thioester, amide, peptide and isopeptide bonds formed by the C-terminal Gly of ubiquitin (a 76-residue protein attached to proteins as an intracellular targeting signal).</text>
        <dbReference type="EC" id="3.4.19.12"/>
    </reaction>
</comment>
<comment type="subunit">
    <text evidence="1">Interacts with RPA1 and RPA2.</text>
</comment>
<comment type="subcellular location">
    <subcellularLocation>
        <location evidence="1">Cytoplasm</location>
    </subcellularLocation>
    <subcellularLocation>
        <location evidence="1">Nucleus</location>
    </subcellularLocation>
    <text evidence="1">Mostly present in the nuclear fraction. Localizes to DNA lesions.</text>
</comment>
<comment type="alternative products">
    <event type="alternative splicing"/>
    <isoform>
        <id>Q3T9Z9-1</id>
        <name>1</name>
        <sequence type="displayed"/>
    </isoform>
    <isoform>
        <id>Q3T9Z9-2</id>
        <name>2</name>
        <sequence type="described" ref="VSP_019537"/>
    </isoform>
    <isoform>
        <id>Q3T9Z9-3</id>
        <name>3</name>
        <sequence type="described" ref="VSP_019536"/>
    </isoform>
    <isoform>
        <id>Q3T9Z9-4</id>
        <name>4</name>
        <sequence type="described" ref="VSP_019534 VSP_019535"/>
    </isoform>
</comment>
<comment type="domain">
    <text evidence="1">The motif interacting with ubiquitin (MIU) and ZUFSP ubiquitin-binding domain (zUBD, also called ZUFSP helical arm ZHA) are responsible for binding the distal (outgoing) ubiquitin units S1 and S2 respectively.</text>
</comment>
<comment type="domain">
    <text evidence="1">C2H2-type zinc finger 4 is a ubiquitin-binding zinc finger (UBZ) and required for polyubiquitin binding, possibly binding the proximal ubiqutin, and for catalytic activity. C2H2-type zinc fingers 1-3 are required for localization to sites of DNA damage.</text>
</comment>
<comment type="similarity">
    <text evidence="7">Belongs to the peptidase C78 family. ZUFSP subfamily.</text>
</comment>
<comment type="sequence caution" evidence="7">
    <conflict type="frameshift">
        <sequence resource="EMBL-CDS" id="BAC36984"/>
    </conflict>
</comment>
<sequence length="577" mass="65593">MLSCNICGETVNSEPDMKAHLIVHMENEIICPFCKLSGINYNEICFHIETVHFEQNAPEKNSEKLAAVQYGHSDRKNTNLQSTAEVTSGIHSACASSFPKESSESLPKDRTVKHEAFYTENITESRKYQKSREKKPGLSEAQGSIYETTYSPPECPFCGKIEGCSQDMEIHVKTKHASLLESPLKDCHQPLYDCPMCGLVCTNYHILQEHVDLHLEESSFQQGMDRVQCSSDRELAHRLQQEEDRKRKSEESRQEREEFQKLQRQYGLDNSGGYKQQQLRHMELEVNRGRMHPSEFHSRKADMLESIAIGIDDGKTKTSGIIEALHRYYQNTATDVRCVWLSTVVDHFHSSFGDKGWGCGYRNFQMLLSSLLQSDVYGDCLKGMAVPCIPKIQSMIEDAWNEGFDPQGASQLNNKLQGTKAWIGACEIYTLLTSLRVKCRIIDFHKSTGPLGTHPRLFEWILNYYSSETEGTPKIVCTSKPPIYLQHQGHSRTVVGIEEKKNRTLCLLVFDPGCPSREMQKLLKQDMEASSLRQLRKSVGNLKHKQYQIVAVEGVLSPEEKVARKQASQVFTAEKIP</sequence>
<keyword id="KW-0007">Acetylation</keyword>
<keyword id="KW-0025">Alternative splicing</keyword>
<keyword id="KW-0963">Cytoplasm</keyword>
<keyword id="KW-0378">Hydrolase</keyword>
<keyword id="KW-0479">Metal-binding</keyword>
<keyword id="KW-0539">Nucleus</keyword>
<keyword id="KW-1185">Reference proteome</keyword>
<keyword id="KW-0677">Repeat</keyword>
<keyword id="KW-0862">Zinc</keyword>
<keyword id="KW-0863">Zinc-finger</keyword>
<feature type="chain" id="PRO_0000244338" description="Zinc finger-containing ubiquitin peptidase 1">
    <location>
        <begin position="1"/>
        <end position="577"/>
    </location>
</feature>
<feature type="zinc finger region" description="C2H2-type 1" evidence="3">
    <location>
        <begin position="2"/>
        <end position="24"/>
    </location>
</feature>
<feature type="zinc finger region" description="C2H2-type 2; atypical" evidence="1">
    <location>
        <begin position="29"/>
        <end position="52"/>
    </location>
</feature>
<feature type="zinc finger region" description="C2H2-type 3; atypical" evidence="1">
    <location>
        <begin position="153"/>
        <end position="176"/>
    </location>
</feature>
<feature type="zinc finger region" description="C2H2-type 4" evidence="3">
    <location>
        <begin position="192"/>
        <end position="214"/>
    </location>
</feature>
<feature type="region of interest" description="Disordered" evidence="4">
    <location>
        <begin position="124"/>
        <end position="145"/>
    </location>
</feature>
<feature type="region of interest" description="MIU" evidence="1">
    <location>
        <begin position="225"/>
        <end position="247"/>
    </location>
</feature>
<feature type="region of interest" description="Disordered" evidence="4">
    <location>
        <begin position="238"/>
        <end position="260"/>
    </location>
</feature>
<feature type="region of interest" description="zUBD/ZHA" evidence="1">
    <location>
        <begin position="248"/>
        <end position="273"/>
    </location>
</feature>
<feature type="compositionally biased region" description="Basic and acidic residues" evidence="4">
    <location>
        <begin position="124"/>
        <end position="137"/>
    </location>
</feature>
<feature type="active site" description="Nucleophile" evidence="1">
    <location>
        <position position="359"/>
    </location>
</feature>
<feature type="active site" description="Proton acceptor" evidence="1">
    <location>
        <position position="490"/>
    </location>
</feature>
<feature type="active site" evidence="2">
    <location>
        <position position="511"/>
    </location>
</feature>
<feature type="site" description="Involved in the stabilization of negative charge on the oxyanion by the formation of the oxyanion hole" evidence="1">
    <location>
        <position position="486"/>
    </location>
</feature>
<feature type="modified residue" description="N6-acetyllysine" evidence="1">
    <location>
        <position position="261"/>
    </location>
</feature>
<feature type="splice variant" id="VSP_019534" description="In isoform 4." evidence="5">
    <original>RQYGLDNSGGYKQQQL</original>
    <variation>ELLKPSIGIIRTLPQM</variation>
    <location>
        <begin position="264"/>
        <end position="279"/>
    </location>
</feature>
<feature type="splice variant" id="VSP_019535" description="In isoform 4." evidence="5">
    <location>
        <begin position="280"/>
        <end position="577"/>
    </location>
</feature>
<feature type="splice variant" id="VSP_019536" description="In isoform 3." evidence="6">
    <location>
        <begin position="529"/>
        <end position="562"/>
    </location>
</feature>
<feature type="splice variant" id="VSP_019537" description="In isoform 2." evidence="6">
    <original>ARKQASQVFTAEKIP</original>
    <variation>VSIG</variation>
    <location>
        <begin position="563"/>
        <end position="577"/>
    </location>
</feature>
<feature type="sequence conflict" description="In Ref. 1; BAE42871." evidence="7" ref="1">
    <original>N</original>
    <variation>D</variation>
    <location>
        <position position="5"/>
    </location>
</feature>
<feature type="sequence conflict" description="In Ref. 2; AAH89514." evidence="7" ref="2">
    <original>T</original>
    <variation>A</variation>
    <location>
        <position position="50"/>
    </location>
</feature>
<feature type="sequence conflict" description="In Ref. 1; BAC36739." evidence="7" ref="1">
    <original>S</original>
    <variation>I</variation>
    <location>
        <position position="182"/>
    </location>
</feature>
<gene>
    <name evidence="8" type="primary">Zup1</name>
    <name type="synonym">Zufsp</name>
</gene>
<protein>
    <recommendedName>
        <fullName evidence="7">Zinc finger-containing ubiquitin peptidase 1</fullName>
        <ecNumber evidence="1">3.4.19.12</ecNumber>
    </recommendedName>
    <alternativeName>
        <fullName>Lys-63-specific deubiquitinase ZUFSP</fullName>
        <shortName>DUB</shortName>
    </alternativeName>
    <alternativeName>
        <fullName>Zinc finger with UFM1-specific peptidase domain protein</fullName>
    </alternativeName>
</protein>